<keyword id="KW-0963">Cytoplasm</keyword>
<keyword id="KW-1017">Isopeptide bond</keyword>
<keyword id="KW-1185">Reference proteome</keyword>
<keyword id="KW-0819">tRNA processing</keyword>
<keyword id="KW-0833">Ubl conjugation pathway</keyword>
<reference key="1">
    <citation type="journal article" date="2007" name="Nature">
        <title>Evolution of genes and genomes on the Drosophila phylogeny.</title>
        <authorList>
            <consortium name="Drosophila 12 genomes consortium"/>
        </authorList>
    </citation>
    <scope>NUCLEOTIDE SEQUENCE [LARGE SCALE GENOMIC DNA]</scope>
</reference>
<dbReference type="EMBL" id="CM000363">
    <property type="protein sequence ID" value="EDX09596.1"/>
    <property type="molecule type" value="Genomic_DNA"/>
</dbReference>
<dbReference type="SMR" id="B4QKW3"/>
<dbReference type="STRING" id="7240.B4QKW3"/>
<dbReference type="EnsemblMetazoa" id="FBtr0212953">
    <property type="protein sequence ID" value="FBpp0211445"/>
    <property type="gene ID" value="FBgn0184765"/>
</dbReference>
<dbReference type="EnsemblMetazoa" id="XM_002083975.3">
    <property type="protein sequence ID" value="XP_002084011.2"/>
    <property type="gene ID" value="LOC6737165"/>
</dbReference>
<dbReference type="HOGENOM" id="CLU_148208_0_1_1"/>
<dbReference type="OMA" id="DYELQPN"/>
<dbReference type="OrthoDB" id="10248987at2759"/>
<dbReference type="PhylomeDB" id="B4QKW3"/>
<dbReference type="UniPathway" id="UPA00988"/>
<dbReference type="Proteomes" id="UP000000304">
    <property type="component" value="Chromosome 3L"/>
</dbReference>
<dbReference type="Bgee" id="FBgn0184765">
    <property type="expression patterns" value="Expressed in embryo and 3 other cell types or tissues"/>
</dbReference>
<dbReference type="GO" id="GO:0005829">
    <property type="term" value="C:cytosol"/>
    <property type="evidence" value="ECO:0007669"/>
    <property type="project" value="UniProtKB-UniRule"/>
</dbReference>
<dbReference type="GO" id="GO:0046329">
    <property type="term" value="P:negative regulation of JNK cascade"/>
    <property type="evidence" value="ECO:0007669"/>
    <property type="project" value="EnsemblMetazoa"/>
</dbReference>
<dbReference type="GO" id="GO:0032447">
    <property type="term" value="P:protein urmylation"/>
    <property type="evidence" value="ECO:0007669"/>
    <property type="project" value="UniProtKB-UniRule"/>
</dbReference>
<dbReference type="GO" id="GO:0034227">
    <property type="term" value="P:tRNA thio-modification"/>
    <property type="evidence" value="ECO:0007669"/>
    <property type="project" value="UniProtKB-UniRule"/>
</dbReference>
<dbReference type="GO" id="GO:0002098">
    <property type="term" value="P:tRNA wobble uridine modification"/>
    <property type="evidence" value="ECO:0007669"/>
    <property type="project" value="UniProtKB-UniRule"/>
</dbReference>
<dbReference type="CDD" id="cd01764">
    <property type="entry name" value="Ubl_Urm1"/>
    <property type="match status" value="1"/>
</dbReference>
<dbReference type="FunFam" id="3.10.20.30:FF:000021">
    <property type="entry name" value="Ubiquitin-related modifier 1"/>
    <property type="match status" value="1"/>
</dbReference>
<dbReference type="Gene3D" id="3.10.20.30">
    <property type="match status" value="1"/>
</dbReference>
<dbReference type="HAMAP" id="MF_03048">
    <property type="entry name" value="Urm1"/>
    <property type="match status" value="1"/>
</dbReference>
<dbReference type="InterPro" id="IPR012675">
    <property type="entry name" value="Beta-grasp_dom_sf"/>
</dbReference>
<dbReference type="InterPro" id="IPR016155">
    <property type="entry name" value="Mopterin_synth/thiamin_S_b"/>
</dbReference>
<dbReference type="InterPro" id="IPR015221">
    <property type="entry name" value="Urm1"/>
</dbReference>
<dbReference type="PANTHER" id="PTHR14986">
    <property type="entry name" value="RURM1 PROTEIN"/>
    <property type="match status" value="1"/>
</dbReference>
<dbReference type="Pfam" id="PF09138">
    <property type="entry name" value="Urm1"/>
    <property type="match status" value="1"/>
</dbReference>
<dbReference type="PIRSF" id="PIRSF037379">
    <property type="entry name" value="Ubiquitin-related_modifier_1"/>
    <property type="match status" value="1"/>
</dbReference>
<dbReference type="SUPFAM" id="SSF54285">
    <property type="entry name" value="MoaD/ThiS"/>
    <property type="match status" value="1"/>
</dbReference>
<comment type="function">
    <text evidence="2">Acts as a sulfur carrier required for 2-thiolation of mcm(5)S(2)U at tRNA wobble positions of cytosolic tRNA(Lys), tRNA(Glu) and tRNA(Gln). Serves as sulfur donor in tRNA 2-thiolation reaction by being thiocarboxylated (-COSH) at its C-terminus by MOCS3. The sulfur is then transferred to tRNA to form 2-thiolation of mcm(5)S(2)U. Also acts as a ubiquitin-like protein (UBL) that is covalently conjugated via an isopeptide bond to lysine residues of target proteins such as Prx2/Jafrac1, Ciao1, Eip71CD and GILT1. The thiocarboxylated form serves as substrate for conjugation and oxidative stress specifically induces the formation of UBL-protein conjugates.</text>
</comment>
<comment type="pathway">
    <text evidence="2">tRNA modification; 5-methoxycarbonylmethyl-2-thiouridine-tRNA biosynthesis.</text>
</comment>
<comment type="subunit">
    <text evidence="1">Interacts with cer.</text>
</comment>
<comment type="subcellular location">
    <subcellularLocation>
        <location evidence="2">Cytoplasm</location>
    </subcellularLocation>
</comment>
<comment type="PTM">
    <text evidence="2">C-terminal thiocarboxylation occurs in 2 steps, it is first acyl-adenylated (-COAMP) via the hesA/moeB/thiF part of the MOCS3 homolog, then thiocarboxylated (-COSH) via the rhodanese domain of the MOCS3 homolog.</text>
</comment>
<comment type="similarity">
    <text evidence="2">Belongs to the URM1 family.</text>
</comment>
<sequence>MGTPELKIILEFSAGAELLFGNIKRRELTLDGNQKWTISNLLKWMHANILTERPELFLQEDTVRPGILVLINDTDWELLGELDYELQPNDNVLFISTLHGG</sequence>
<gene>
    <name evidence="1" type="primary">Urm1</name>
    <name type="ORF">GD13043</name>
</gene>
<proteinExistence type="inferred from homology"/>
<organism>
    <name type="scientific">Drosophila simulans</name>
    <name type="common">Fruit fly</name>
    <dbReference type="NCBI Taxonomy" id="7240"/>
    <lineage>
        <taxon>Eukaryota</taxon>
        <taxon>Metazoa</taxon>
        <taxon>Ecdysozoa</taxon>
        <taxon>Arthropoda</taxon>
        <taxon>Hexapoda</taxon>
        <taxon>Insecta</taxon>
        <taxon>Pterygota</taxon>
        <taxon>Neoptera</taxon>
        <taxon>Endopterygota</taxon>
        <taxon>Diptera</taxon>
        <taxon>Brachycera</taxon>
        <taxon>Muscomorpha</taxon>
        <taxon>Ephydroidea</taxon>
        <taxon>Drosophilidae</taxon>
        <taxon>Drosophila</taxon>
        <taxon>Sophophora</taxon>
    </lineage>
</organism>
<accession>B4QKW3</accession>
<protein>
    <recommendedName>
        <fullName evidence="2">Ubiquitin-related modifier 1 homolog</fullName>
    </recommendedName>
</protein>
<feature type="chain" id="PRO_0000367863" description="Ubiquitin-related modifier 1 homolog">
    <location>
        <begin position="1"/>
        <end position="101"/>
    </location>
</feature>
<feature type="modified residue" description="1-thioglycine" evidence="2">
    <location>
        <position position="101"/>
    </location>
</feature>
<feature type="cross-link" description="Glycyl lysine isopeptide (Gly-Lys) (interchain with K-? in acceptor proteins)" evidence="2">
    <location>
        <position position="101"/>
    </location>
</feature>
<evidence type="ECO:0000250" key="1">
    <source>
        <dbReference type="UniProtKB" id="Q7KU86"/>
    </source>
</evidence>
<evidence type="ECO:0000255" key="2">
    <source>
        <dbReference type="HAMAP-Rule" id="MF_03048"/>
    </source>
</evidence>
<name>URM1_DROSI</name>